<evidence type="ECO:0000255" key="1">
    <source>
        <dbReference type="PROSITE-ProRule" id="PRU00434"/>
    </source>
</evidence>
<evidence type="ECO:0000305" key="2"/>
<name>Y2593_MYCBO</name>
<protein>
    <recommendedName>
        <fullName>Uncharacterized ABC transporter ATP-binding protein Mb2593</fullName>
    </recommendedName>
</protein>
<sequence length="330" mass="35429">MGGLTISDLVVEYSSGGYAVRPIDGLSLDVAPGSLVILLGPSGCGKTTLLSCLGGILRPKSGSIKFDDVDITTLEGAALAKYRRDKVGIVFQAFNLVSSLTALENVMVPLRAAGVSRAAARKRAEDLLIRVNLGERMKHRPGDMSGGQQQRVAVARAIALDPQLILADEPTAHLDFIQVEEVLRLIRSLAQGDRVVVVATHDSRMLPLADRVLELMPAQVSPNQPPETVHVKAGEVLFEQSTMGDLIYVVSEGEFEIVRELADGGEELVKTAAPGDYFGEIGVLFHLPRSATVRARSDATAVGYTAQAFRERLGVTRVADLIEHRELASE</sequence>
<keyword id="KW-0067">ATP-binding</keyword>
<keyword id="KW-0547">Nucleotide-binding</keyword>
<keyword id="KW-1185">Reference proteome</keyword>
<keyword id="KW-0813">Transport</keyword>
<dbReference type="EMBL" id="LT708304">
    <property type="protein sequence ID" value="SIU01211.1"/>
    <property type="molecule type" value="Genomic_DNA"/>
</dbReference>
<dbReference type="RefSeq" id="NP_856239.1">
    <property type="nucleotide sequence ID" value="NC_002945.3"/>
</dbReference>
<dbReference type="RefSeq" id="WP_003899378.1">
    <property type="nucleotide sequence ID" value="NC_002945.4"/>
</dbReference>
<dbReference type="SMR" id="P63402"/>
<dbReference type="KEGG" id="mbo:BQ2027_MB2593"/>
<dbReference type="PATRIC" id="fig|233413.5.peg.2852"/>
<dbReference type="Proteomes" id="UP000001419">
    <property type="component" value="Chromosome"/>
</dbReference>
<dbReference type="GO" id="GO:0005886">
    <property type="term" value="C:plasma membrane"/>
    <property type="evidence" value="ECO:0007669"/>
    <property type="project" value="TreeGrafter"/>
</dbReference>
<dbReference type="GO" id="GO:0005524">
    <property type="term" value="F:ATP binding"/>
    <property type="evidence" value="ECO:0007669"/>
    <property type="project" value="UniProtKB-KW"/>
</dbReference>
<dbReference type="GO" id="GO:0016887">
    <property type="term" value="F:ATP hydrolysis activity"/>
    <property type="evidence" value="ECO:0007669"/>
    <property type="project" value="InterPro"/>
</dbReference>
<dbReference type="GO" id="GO:0022857">
    <property type="term" value="F:transmembrane transporter activity"/>
    <property type="evidence" value="ECO:0007669"/>
    <property type="project" value="TreeGrafter"/>
</dbReference>
<dbReference type="CDD" id="cd03255">
    <property type="entry name" value="ABC_MJ0796_LolCDE_FtsE"/>
    <property type="match status" value="1"/>
</dbReference>
<dbReference type="CDD" id="cd00038">
    <property type="entry name" value="CAP_ED"/>
    <property type="match status" value="1"/>
</dbReference>
<dbReference type="FunFam" id="3.40.50.300:FF:001448">
    <property type="entry name" value="Glutamine ABC transporter ATP-binding protein"/>
    <property type="match status" value="1"/>
</dbReference>
<dbReference type="FunFam" id="2.60.120.10:FF:000127">
    <property type="entry name" value="Glutamine-transport ATP-binding protein ABC transporter GLNQ"/>
    <property type="match status" value="1"/>
</dbReference>
<dbReference type="Gene3D" id="2.60.120.10">
    <property type="entry name" value="Jelly Rolls"/>
    <property type="match status" value="1"/>
</dbReference>
<dbReference type="Gene3D" id="3.40.50.300">
    <property type="entry name" value="P-loop containing nucleotide triphosphate hydrolases"/>
    <property type="match status" value="1"/>
</dbReference>
<dbReference type="InterPro" id="IPR003593">
    <property type="entry name" value="AAA+_ATPase"/>
</dbReference>
<dbReference type="InterPro" id="IPR003439">
    <property type="entry name" value="ABC_transporter-like_ATP-bd"/>
</dbReference>
<dbReference type="InterPro" id="IPR017871">
    <property type="entry name" value="ABC_transporter-like_CS"/>
</dbReference>
<dbReference type="InterPro" id="IPR015854">
    <property type="entry name" value="ABC_transpr_LolD-like"/>
</dbReference>
<dbReference type="InterPro" id="IPR018488">
    <property type="entry name" value="cNMP-bd_CS"/>
</dbReference>
<dbReference type="InterPro" id="IPR000595">
    <property type="entry name" value="cNMP-bd_dom"/>
</dbReference>
<dbReference type="InterPro" id="IPR018490">
    <property type="entry name" value="cNMP-bd_dom_sf"/>
</dbReference>
<dbReference type="InterPro" id="IPR017911">
    <property type="entry name" value="MacB-like_ATP-bd"/>
</dbReference>
<dbReference type="InterPro" id="IPR027417">
    <property type="entry name" value="P-loop_NTPase"/>
</dbReference>
<dbReference type="InterPro" id="IPR014710">
    <property type="entry name" value="RmlC-like_jellyroll"/>
</dbReference>
<dbReference type="PANTHER" id="PTHR24220">
    <property type="entry name" value="IMPORT ATP-BINDING PROTEIN"/>
    <property type="match status" value="1"/>
</dbReference>
<dbReference type="PANTHER" id="PTHR24220:SF689">
    <property type="entry name" value="LIPOPROTEIN-RELEASING SYSTEM ATP-BINDING PROTEIN LOLD"/>
    <property type="match status" value="1"/>
</dbReference>
<dbReference type="Pfam" id="PF00005">
    <property type="entry name" value="ABC_tran"/>
    <property type="match status" value="1"/>
</dbReference>
<dbReference type="Pfam" id="PF00027">
    <property type="entry name" value="cNMP_binding"/>
    <property type="match status" value="1"/>
</dbReference>
<dbReference type="PRINTS" id="PR00103">
    <property type="entry name" value="CAMPKINASE"/>
</dbReference>
<dbReference type="SMART" id="SM00382">
    <property type="entry name" value="AAA"/>
    <property type="match status" value="1"/>
</dbReference>
<dbReference type="SMART" id="SM00100">
    <property type="entry name" value="cNMP"/>
    <property type="match status" value="1"/>
</dbReference>
<dbReference type="SUPFAM" id="SSF51206">
    <property type="entry name" value="cAMP-binding domain-like"/>
    <property type="match status" value="1"/>
</dbReference>
<dbReference type="SUPFAM" id="SSF52540">
    <property type="entry name" value="P-loop containing nucleoside triphosphate hydrolases"/>
    <property type="match status" value="1"/>
</dbReference>
<dbReference type="PROSITE" id="PS00211">
    <property type="entry name" value="ABC_TRANSPORTER_1"/>
    <property type="match status" value="1"/>
</dbReference>
<dbReference type="PROSITE" id="PS50893">
    <property type="entry name" value="ABC_TRANSPORTER_2"/>
    <property type="match status" value="1"/>
</dbReference>
<dbReference type="PROSITE" id="PS00889">
    <property type="entry name" value="CNMP_BINDING_2"/>
    <property type="match status" value="1"/>
</dbReference>
<dbReference type="PROSITE" id="PS50042">
    <property type="entry name" value="CNMP_BINDING_3"/>
    <property type="match status" value="1"/>
</dbReference>
<feature type="chain" id="PRO_0000093269" description="Uncharacterized ABC transporter ATP-binding protein Mb2593">
    <location>
        <begin position="1"/>
        <end position="330"/>
    </location>
</feature>
<feature type="domain" description="ABC transporter" evidence="1">
    <location>
        <begin position="4"/>
        <end position="242"/>
    </location>
</feature>
<feature type="binding site" evidence="1">
    <location>
        <begin position="40"/>
        <end position="47"/>
    </location>
    <ligand>
        <name>ATP</name>
        <dbReference type="ChEBI" id="CHEBI:30616"/>
    </ligand>
</feature>
<feature type="binding site">
    <location>
        <begin position="210"/>
        <end position="330"/>
    </location>
    <ligand>
        <name>a nucleoside 3',5'-cyclic phosphate</name>
        <dbReference type="ChEBI" id="CHEBI:58464"/>
    </ligand>
</feature>
<reference key="1">
    <citation type="journal article" date="2003" name="Proc. Natl. Acad. Sci. U.S.A.">
        <title>The complete genome sequence of Mycobacterium bovis.</title>
        <authorList>
            <person name="Garnier T."/>
            <person name="Eiglmeier K."/>
            <person name="Camus J.-C."/>
            <person name="Medina N."/>
            <person name="Mansoor H."/>
            <person name="Pryor M."/>
            <person name="Duthoy S."/>
            <person name="Grondin S."/>
            <person name="Lacroix C."/>
            <person name="Monsempe C."/>
            <person name="Simon S."/>
            <person name="Harris B."/>
            <person name="Atkin R."/>
            <person name="Doggett J."/>
            <person name="Mayes R."/>
            <person name="Keating L."/>
            <person name="Wheeler P.R."/>
            <person name="Parkhill J."/>
            <person name="Barrell B.G."/>
            <person name="Cole S.T."/>
            <person name="Gordon S.V."/>
            <person name="Hewinson R.G."/>
        </authorList>
    </citation>
    <scope>NUCLEOTIDE SEQUENCE [LARGE SCALE GENOMIC DNA]</scope>
    <source>
        <strain>ATCC BAA-935 / AF2122/97</strain>
    </source>
</reference>
<reference key="2">
    <citation type="journal article" date="2017" name="Genome Announc.">
        <title>Updated reference genome sequence and annotation of Mycobacterium bovis AF2122/97.</title>
        <authorList>
            <person name="Malone K.M."/>
            <person name="Farrell D."/>
            <person name="Stuber T.P."/>
            <person name="Schubert O.T."/>
            <person name="Aebersold R."/>
            <person name="Robbe-Austerman S."/>
            <person name="Gordon S.V."/>
        </authorList>
    </citation>
    <scope>NUCLEOTIDE SEQUENCE [LARGE SCALE GENOMIC DNA]</scope>
    <scope>GENOME REANNOTATION</scope>
    <source>
        <strain>ATCC BAA-935 / AF2122/97</strain>
    </source>
</reference>
<comment type="similarity">
    <text evidence="2">Belongs to the ABC transporter superfamily.</text>
</comment>
<proteinExistence type="inferred from homology"/>
<organism>
    <name type="scientific">Mycobacterium bovis (strain ATCC BAA-935 / AF2122/97)</name>
    <dbReference type="NCBI Taxonomy" id="233413"/>
    <lineage>
        <taxon>Bacteria</taxon>
        <taxon>Bacillati</taxon>
        <taxon>Actinomycetota</taxon>
        <taxon>Actinomycetes</taxon>
        <taxon>Mycobacteriales</taxon>
        <taxon>Mycobacteriaceae</taxon>
        <taxon>Mycobacterium</taxon>
        <taxon>Mycobacterium tuberculosis complex</taxon>
    </lineage>
</organism>
<accession>P63402</accession>
<accession>A0A1R3Y1J9</accession>
<accession>Q50734</accession>
<accession>X2BKU1</accession>
<gene>
    <name type="ordered locus">BQ2027_MB2593</name>
</gene>